<dbReference type="EMBL" id="M10023">
    <property type="protein sequence ID" value="AAA46726.1"/>
    <property type="molecule type" value="Genomic_DNA"/>
</dbReference>
<dbReference type="EMBL" id="L22858">
    <property type="protein sequence ID" value="AAA66767.1"/>
    <property type="molecule type" value="Genomic_DNA"/>
</dbReference>
<dbReference type="EMBL" id="K02701">
    <property type="protein sequence ID" value="AAA46723.1"/>
    <property type="molecule type" value="Genomic_DNA"/>
</dbReference>
<dbReference type="EMBL" id="X04611">
    <property type="protein sequence ID" value="CAA28281.1"/>
    <property type="molecule type" value="Genomic_DNA"/>
</dbReference>
<dbReference type="PIR" id="B72867">
    <property type="entry name" value="B72867"/>
</dbReference>
<dbReference type="SMR" id="P04870"/>
<dbReference type="KEGG" id="vg:1403970"/>
<dbReference type="OrthoDB" id="27189at10239"/>
<dbReference type="Proteomes" id="UP000008292">
    <property type="component" value="Segment"/>
</dbReference>
<dbReference type="GO" id="GO:0030430">
    <property type="term" value="C:host cell cytoplasm"/>
    <property type="evidence" value="ECO:0007669"/>
    <property type="project" value="UniProtKB-SubCell"/>
</dbReference>
<dbReference type="GO" id="GO:0042025">
    <property type="term" value="C:host cell nucleus"/>
    <property type="evidence" value="ECO:0007669"/>
    <property type="project" value="UniProtKB-SubCell"/>
</dbReference>
<dbReference type="GO" id="GO:0039679">
    <property type="term" value="C:viral occlusion body"/>
    <property type="evidence" value="ECO:0007669"/>
    <property type="project" value="UniProtKB-KW"/>
</dbReference>
<dbReference type="InterPro" id="IPR008702">
    <property type="entry name" value="NPV_P10"/>
</dbReference>
<dbReference type="Pfam" id="PF05531">
    <property type="entry name" value="NPV_P10"/>
    <property type="match status" value="1"/>
</dbReference>
<reference key="1">
    <citation type="journal article" date="1984" name="Virology">
        <title>Nucleotide sequence of the p10 polypeptide gene of Autographa californica nuclear polyhedrosis virus.</title>
        <authorList>
            <person name="Kuzio J."/>
            <person name="Rohel D.Z."/>
            <person name="Curry C.J."/>
            <person name="Krebs A."/>
            <person name="Carstens E.B."/>
            <person name="Faulkner P."/>
        </authorList>
    </citation>
    <scope>NUCLEOTIDE SEQUENCE [GENOMIC DNA]</scope>
</reference>
<reference key="2">
    <citation type="journal article" date="1994" name="Virology">
        <title>The complete DNA sequence of Autographa californica nuclear polyhedrosis virus.</title>
        <authorList>
            <person name="Ayres M.D."/>
            <person name="Howard S.C."/>
            <person name="Kuzio J."/>
            <person name="Lopez-Ferber M."/>
            <person name="Possee R.D."/>
        </authorList>
    </citation>
    <scope>NUCLEOTIDE SEQUENCE [LARGE SCALE GENOMIC DNA]</scope>
    <source>
        <strain>C6</strain>
    </source>
</reference>
<reference key="3">
    <citation type="journal article" date="1986" name="J. Gen. Virol.">
        <title>Nucleotide sequence of a portion of the Autographa californica nuclear polyhedrosis virus genome containing the EcoRI site-rich region (hr5) and an open reading frame just 5' of the p10 gene.</title>
        <authorList>
            <person name="Liu A."/>
            <person name="Qin J."/>
            <person name="Rankin C."/>
            <person name="Hardin S.E."/>
            <person name="Weaver R.F."/>
        </authorList>
    </citation>
    <scope>NUCLEOTIDE SEQUENCE [GENOMIC DNA] OF 1-79</scope>
</reference>
<reference key="4">
    <citation type="journal article" date="1984" name="J. Virol.">
        <title>Transcription of overlapping sets of RNAs from the genome of Autographa californica nuclear polyhedrosis virus: a novel method for mapping RNAs.</title>
        <authorList>
            <person name="Luebbert H."/>
            <person name="Doerfler W."/>
        </authorList>
    </citation>
    <scope>NUCLEOTIDE SEQUENCE [GENOMIC DNA] OF 1-20</scope>
</reference>
<reference key="5">
    <citation type="journal article" date="1988" name="J. Gen. Virol.">
        <title>Functional studies on the p10 gene of Autographa californica nuclear polyhedrosis virus using a recombinant expressing a p10-beta-galactosidase fusion gene.</title>
        <authorList>
            <person name="Vlak J.M."/>
            <person name="Klinkenberg F.A."/>
            <person name="Zaal K.J."/>
            <person name="Usmany M."/>
            <person name="Klinge-Roode E.C."/>
            <person name="Geervliet J.B."/>
            <person name="Roosien J."/>
            <person name="van Lent J.W."/>
        </authorList>
    </citation>
    <scope>SUBCELLULAR LOCATION</scope>
    <scope>FUNCTION</scope>
</reference>
<reference key="6">
    <citation type="journal article" date="2003" name="Virology">
        <title>Formation of P10 tubular structures during AcMNPV infection depends on the integrity of host-cell microtubules.</title>
        <authorList>
            <person name="Patmanidi A.L."/>
            <person name="Possee R.D."/>
            <person name="King L.A."/>
        </authorList>
    </citation>
    <scope>SUBCELLULAR LOCATION</scope>
    <scope>FUNCTION</scope>
</reference>
<reference key="7">
    <citation type="journal article" date="2007" name="Virology">
        <title>The heptad repeats region is essential for AcMNPV P10 filament formation and not the proline-rich or the C-terminus basic regions.</title>
        <authorList>
            <person name="Dong C."/>
            <person name="Deng F."/>
            <person name="Li D."/>
            <person name="Wang H."/>
            <person name="Hu Z."/>
        </authorList>
    </citation>
    <scope>FUNCTION</scope>
</reference>
<reference key="8">
    <citation type="journal article" date="2009" name="J. Gen. Virol.">
        <title>Characterization of a virion occlusion-defective Autographa californica multiple nucleopolyhedrovirus mutant lacking the p26, p10 and p74 genes.</title>
        <authorList>
            <person name="Wang L."/>
            <person name="Salem T.Z."/>
            <person name="Campbell D.J."/>
            <person name="Turney C.M."/>
            <person name="Kumar C.M."/>
            <person name="Cheng X.W."/>
        </authorList>
    </citation>
    <scope>FUNCTION</scope>
</reference>
<protein>
    <recommendedName>
        <fullName>Protein p10</fullName>
    </recommendedName>
    <alternativeName>
        <fullName>Fibrous body protein</fullName>
    </alternativeName>
</protein>
<organismHost>
    <name type="scientific">Lepidoptera</name>
    <name type="common">butterflies and moths</name>
    <dbReference type="NCBI Taxonomy" id="7088"/>
</organismHost>
<comment type="function">
    <text evidence="1 2 3 4">Plays a role in the proper virion occlusion of the polyhedra. Forms extensive fibrillar structures in both host nucleus and cytoplasm. Involved in the liberation of polyhedra from infected insect cells.</text>
</comment>
<comment type="subcellular location">
    <subcellularLocation>
        <location evidence="1 4">Host cytoplasm</location>
    </subcellularLocation>
    <subcellularLocation>
        <location evidence="1 4">Host nucleus</location>
    </subcellularLocation>
</comment>
<sequence length="94" mass="10310">MSKPNVLTQILDAVTETNTKVDSVQTQLNGLEESFQLLDGLPAQLTDLNTKISEIQSILTGDIVPDLPDSLKPKLKTQAFELDSDARRGKRSSK</sequence>
<evidence type="ECO:0000269" key="1">
    <source>
    </source>
</evidence>
<evidence type="ECO:0000269" key="2">
    <source>
    </source>
</evidence>
<evidence type="ECO:0000269" key="3">
    <source>
    </source>
</evidence>
<evidence type="ECO:0000269" key="4">
    <source>
    </source>
</evidence>
<evidence type="ECO:0000305" key="5"/>
<keyword id="KW-1035">Host cytoplasm</keyword>
<keyword id="KW-1048">Host nucleus</keyword>
<keyword id="KW-0426">Late protein</keyword>
<keyword id="KW-1185">Reference proteome</keyword>
<keyword id="KW-0842">Viral occlusion body</keyword>
<accession>P04870</accession>
<feature type="chain" id="PRO_0000132879" description="Protein p10">
    <location>
        <begin position="1"/>
        <end position="94"/>
    </location>
</feature>
<feature type="sequence conflict" description="In Ref. 1 and 3." evidence="5" ref="1 3">
    <original>T</original>
    <variation>S</variation>
    <location>
        <position position="77"/>
    </location>
</feature>
<gene>
    <name type="primary">P10</name>
</gene>
<name>P10_NPVAC</name>
<proteinExistence type="predicted"/>
<organism>
    <name type="scientific">Autographa californica nuclear polyhedrosis virus</name>
    <name type="common">AcMNPV</name>
    <dbReference type="NCBI Taxonomy" id="46015"/>
    <lineage>
        <taxon>Viruses</taxon>
        <taxon>Viruses incertae sedis</taxon>
        <taxon>Naldaviricetes</taxon>
        <taxon>Lefavirales</taxon>
        <taxon>Baculoviridae</taxon>
        <taxon>Alphabaculovirus</taxon>
        <taxon>Alphabaculovirus aucalifornicae</taxon>
    </lineage>
</organism>